<proteinExistence type="inferred from homology"/>
<protein>
    <recommendedName>
        <fullName evidence="1">ATP-dependent Clp protease proteolytic subunit</fullName>
        <ecNumber evidence="1">3.4.21.92</ecNumber>
    </recommendedName>
    <alternativeName>
        <fullName evidence="1">Endopeptidase Clp</fullName>
    </alternativeName>
</protein>
<evidence type="ECO:0000255" key="1">
    <source>
        <dbReference type="HAMAP-Rule" id="MF_00444"/>
    </source>
</evidence>
<organism>
    <name type="scientific">Haemophilus influenzae (strain PittGG)</name>
    <dbReference type="NCBI Taxonomy" id="374931"/>
    <lineage>
        <taxon>Bacteria</taxon>
        <taxon>Pseudomonadati</taxon>
        <taxon>Pseudomonadota</taxon>
        <taxon>Gammaproteobacteria</taxon>
        <taxon>Pasteurellales</taxon>
        <taxon>Pasteurellaceae</taxon>
        <taxon>Haemophilus</taxon>
    </lineage>
</organism>
<dbReference type="EC" id="3.4.21.92" evidence="1"/>
<dbReference type="EMBL" id="CP000672">
    <property type="protein sequence ID" value="ABR00252.1"/>
    <property type="molecule type" value="Genomic_DNA"/>
</dbReference>
<dbReference type="SMR" id="A5UHJ6"/>
<dbReference type="MEROPS" id="S14.001"/>
<dbReference type="KEGG" id="hiq:CGSHiGG_06885"/>
<dbReference type="HOGENOM" id="CLU_058707_3_2_6"/>
<dbReference type="Proteomes" id="UP000001990">
    <property type="component" value="Chromosome"/>
</dbReference>
<dbReference type="GO" id="GO:0005737">
    <property type="term" value="C:cytoplasm"/>
    <property type="evidence" value="ECO:0007669"/>
    <property type="project" value="UniProtKB-SubCell"/>
</dbReference>
<dbReference type="GO" id="GO:0009368">
    <property type="term" value="C:endopeptidase Clp complex"/>
    <property type="evidence" value="ECO:0007669"/>
    <property type="project" value="TreeGrafter"/>
</dbReference>
<dbReference type="GO" id="GO:0004176">
    <property type="term" value="F:ATP-dependent peptidase activity"/>
    <property type="evidence" value="ECO:0007669"/>
    <property type="project" value="InterPro"/>
</dbReference>
<dbReference type="GO" id="GO:0051117">
    <property type="term" value="F:ATPase binding"/>
    <property type="evidence" value="ECO:0007669"/>
    <property type="project" value="TreeGrafter"/>
</dbReference>
<dbReference type="GO" id="GO:0004252">
    <property type="term" value="F:serine-type endopeptidase activity"/>
    <property type="evidence" value="ECO:0007669"/>
    <property type="project" value="UniProtKB-UniRule"/>
</dbReference>
<dbReference type="GO" id="GO:0006515">
    <property type="term" value="P:protein quality control for misfolded or incompletely synthesized proteins"/>
    <property type="evidence" value="ECO:0007669"/>
    <property type="project" value="TreeGrafter"/>
</dbReference>
<dbReference type="CDD" id="cd07017">
    <property type="entry name" value="S14_ClpP_2"/>
    <property type="match status" value="1"/>
</dbReference>
<dbReference type="FunFam" id="3.90.226.10:FF:000001">
    <property type="entry name" value="ATP-dependent Clp protease proteolytic subunit"/>
    <property type="match status" value="1"/>
</dbReference>
<dbReference type="Gene3D" id="3.90.226.10">
    <property type="entry name" value="2-enoyl-CoA Hydratase, Chain A, domain 1"/>
    <property type="match status" value="1"/>
</dbReference>
<dbReference type="HAMAP" id="MF_00444">
    <property type="entry name" value="ClpP"/>
    <property type="match status" value="1"/>
</dbReference>
<dbReference type="InterPro" id="IPR001907">
    <property type="entry name" value="ClpP"/>
</dbReference>
<dbReference type="InterPro" id="IPR029045">
    <property type="entry name" value="ClpP/crotonase-like_dom_sf"/>
</dbReference>
<dbReference type="InterPro" id="IPR023562">
    <property type="entry name" value="ClpP/TepA"/>
</dbReference>
<dbReference type="InterPro" id="IPR033135">
    <property type="entry name" value="ClpP_His_AS"/>
</dbReference>
<dbReference type="InterPro" id="IPR018215">
    <property type="entry name" value="ClpP_Ser_AS"/>
</dbReference>
<dbReference type="NCBIfam" id="TIGR00493">
    <property type="entry name" value="clpP"/>
    <property type="match status" value="1"/>
</dbReference>
<dbReference type="NCBIfam" id="NF001368">
    <property type="entry name" value="PRK00277.1"/>
    <property type="match status" value="1"/>
</dbReference>
<dbReference type="NCBIfam" id="NF009205">
    <property type="entry name" value="PRK12553.1"/>
    <property type="match status" value="1"/>
</dbReference>
<dbReference type="PANTHER" id="PTHR10381">
    <property type="entry name" value="ATP-DEPENDENT CLP PROTEASE PROTEOLYTIC SUBUNIT"/>
    <property type="match status" value="1"/>
</dbReference>
<dbReference type="PANTHER" id="PTHR10381:SF70">
    <property type="entry name" value="ATP-DEPENDENT CLP PROTEASE PROTEOLYTIC SUBUNIT"/>
    <property type="match status" value="1"/>
</dbReference>
<dbReference type="Pfam" id="PF00574">
    <property type="entry name" value="CLP_protease"/>
    <property type="match status" value="1"/>
</dbReference>
<dbReference type="PRINTS" id="PR00127">
    <property type="entry name" value="CLPPROTEASEP"/>
</dbReference>
<dbReference type="SUPFAM" id="SSF52096">
    <property type="entry name" value="ClpP/crotonase"/>
    <property type="match status" value="1"/>
</dbReference>
<dbReference type="PROSITE" id="PS00382">
    <property type="entry name" value="CLP_PROTEASE_HIS"/>
    <property type="match status" value="1"/>
</dbReference>
<dbReference type="PROSITE" id="PS00381">
    <property type="entry name" value="CLP_PROTEASE_SER"/>
    <property type="match status" value="1"/>
</dbReference>
<comment type="function">
    <text evidence="1">Cleaves peptides in various proteins in a process that requires ATP hydrolysis. Has a chymotrypsin-like activity. Plays a major role in the degradation of misfolded proteins.</text>
</comment>
<comment type="catalytic activity">
    <reaction evidence="1">
        <text>Hydrolysis of proteins to small peptides in the presence of ATP and magnesium. alpha-casein is the usual test substrate. In the absence of ATP, only oligopeptides shorter than five residues are hydrolyzed (such as succinyl-Leu-Tyr-|-NHMec, and Leu-Tyr-Leu-|-Tyr-Trp, in which cleavage of the -Tyr-|-Leu- and -Tyr-|-Trp bonds also occurs).</text>
        <dbReference type="EC" id="3.4.21.92"/>
    </reaction>
</comment>
<comment type="subunit">
    <text evidence="1">Fourteen ClpP subunits assemble into 2 heptameric rings which stack back to back to give a disk-like structure with a central cavity, resembling the structure of eukaryotic proteasomes.</text>
</comment>
<comment type="subcellular location">
    <subcellularLocation>
        <location evidence="1">Cytoplasm</location>
    </subcellularLocation>
</comment>
<comment type="similarity">
    <text evidence="1">Belongs to the peptidase S14 family.</text>
</comment>
<name>CLPP_HAEIG</name>
<sequence length="193" mass="21403">MSVIPMVVEQTSRGERSYDIYSRLLKERVIFLSGEVEDRMANLIVAQLLFLESEDPTKDINIYINSPGGSVTAGMAIYDTMQFIKPDIRTLCIGQACSMGAFLLAGGTAGKRAALPNARVMIHQPLGGFRGQASDIQIHAQEILKIKHTLNDRLAFHTGQSIERIEKDTDRDNFMSAEEAQAYGLVDEVLVKR</sequence>
<feature type="chain" id="PRO_1000026098" description="ATP-dependent Clp protease proteolytic subunit">
    <location>
        <begin position="1"/>
        <end position="193"/>
    </location>
</feature>
<feature type="active site" description="Nucleophile" evidence="1">
    <location>
        <position position="98"/>
    </location>
</feature>
<feature type="active site" evidence="1">
    <location>
        <position position="123"/>
    </location>
</feature>
<gene>
    <name evidence="1" type="primary">clpP</name>
    <name type="ordered locus">CGSHiGG_06885</name>
</gene>
<keyword id="KW-0963">Cytoplasm</keyword>
<keyword id="KW-0378">Hydrolase</keyword>
<keyword id="KW-0645">Protease</keyword>
<keyword id="KW-0720">Serine protease</keyword>
<accession>A5UHJ6</accession>
<reference key="1">
    <citation type="journal article" date="2007" name="Genome Biol.">
        <title>Characterization and modeling of the Haemophilus influenzae core and supragenomes based on the complete genomic sequences of Rd and 12 clinical nontypeable strains.</title>
        <authorList>
            <person name="Hogg J.S."/>
            <person name="Hu F.Z."/>
            <person name="Janto B."/>
            <person name="Boissy R."/>
            <person name="Hayes J."/>
            <person name="Keefe R."/>
            <person name="Post J.C."/>
            <person name="Ehrlich G.D."/>
        </authorList>
    </citation>
    <scope>NUCLEOTIDE SEQUENCE [LARGE SCALE GENOMIC DNA]</scope>
    <source>
        <strain>PittGG</strain>
    </source>
</reference>